<reference key="1">
    <citation type="journal article" date="1992" name="Infect. Immun.">
        <title>Nucleotide sequence of the lecithinase operon of Listeria monocytogenes and possible role of lecithinase in cell-to-cell spread.</title>
        <authorList>
            <person name="Vazquez-Boland J.-A."/>
            <person name="Kocks C."/>
            <person name="Dramsi S."/>
            <person name="Ohayon H."/>
            <person name="Geoffroy C."/>
            <person name="Mengaud J."/>
            <person name="Cossart P."/>
        </authorList>
    </citation>
    <scope>NUCLEOTIDE SEQUENCE [GENOMIC DNA]</scope>
    <source>
        <strain>LO28 / Serovar 1/2c</strain>
    </source>
</reference>
<reference key="2">
    <citation type="journal article" date="1992" name="Cell">
        <title>L. monocytogenes-induced actin assembly requires the actA gene product, a surface protein.</title>
        <authorList>
            <person name="Kocks C."/>
            <person name="Gouin E."/>
            <person name="Tabouret M."/>
            <person name="Berche P."/>
            <person name="Ohayon H."/>
            <person name="Cossart P."/>
        </authorList>
    </citation>
    <scope>NUCLEOTIDE SEQUENCE [GENOMIC DNA]</scope>
</reference>
<reference key="3">
    <citation type="journal article" date="1992" name="EMBO J.">
        <title>A novel bacterial virulence gene in Listeria monocytogenes required for host cell microfilament interaction with homology to the proline-rich region of vinculin.</title>
        <authorList>
            <person name="Domann E."/>
            <person name="Wehland J."/>
            <person name="Rohde M."/>
            <person name="Pistor S."/>
            <person name="Hartl M."/>
            <person name="Goebel W."/>
            <person name="Leimeister-Waechter M."/>
            <person name="Wuensher M."/>
            <person name="Chakraborty T."/>
        </authorList>
    </citation>
    <scope>NUCLEOTIDE SEQUENCE [GENOMIC DNA]</scope>
    <scope>PROTEIN SEQUENCE OF 30-59</scope>
    <source>
        <strain>EGD / Serovar 1/2a</strain>
    </source>
</reference>
<reference key="4">
    <citation type="journal article" date="2001" name="Science">
        <title>Comparative genomics of Listeria species.</title>
        <authorList>
            <person name="Glaser P."/>
            <person name="Frangeul L."/>
            <person name="Buchrieser C."/>
            <person name="Rusniok C."/>
            <person name="Amend A."/>
            <person name="Baquero F."/>
            <person name="Berche P."/>
            <person name="Bloecker H."/>
            <person name="Brandt P."/>
            <person name="Chakraborty T."/>
            <person name="Charbit A."/>
            <person name="Chetouani F."/>
            <person name="Couve E."/>
            <person name="de Daruvar A."/>
            <person name="Dehoux P."/>
            <person name="Domann E."/>
            <person name="Dominguez-Bernal G."/>
            <person name="Duchaud E."/>
            <person name="Durant L."/>
            <person name="Dussurget O."/>
            <person name="Entian K.-D."/>
            <person name="Fsihi H."/>
            <person name="Garcia-del Portillo F."/>
            <person name="Garrido P."/>
            <person name="Gautier L."/>
            <person name="Goebel W."/>
            <person name="Gomez-Lopez N."/>
            <person name="Hain T."/>
            <person name="Hauf J."/>
            <person name="Jackson D."/>
            <person name="Jones L.-M."/>
            <person name="Kaerst U."/>
            <person name="Kreft J."/>
            <person name="Kuhn M."/>
            <person name="Kunst F."/>
            <person name="Kurapkat G."/>
            <person name="Madueno E."/>
            <person name="Maitournam A."/>
            <person name="Mata Vicente J."/>
            <person name="Ng E."/>
            <person name="Nedjari H."/>
            <person name="Nordsiek G."/>
            <person name="Novella S."/>
            <person name="de Pablos B."/>
            <person name="Perez-Diaz J.-C."/>
            <person name="Purcell R."/>
            <person name="Remmel B."/>
            <person name="Rose M."/>
            <person name="Schlueter T."/>
            <person name="Simoes N."/>
            <person name="Tierrez A."/>
            <person name="Vazquez-Boland J.-A."/>
            <person name="Voss H."/>
            <person name="Wehland J."/>
            <person name="Cossart P."/>
        </authorList>
    </citation>
    <scope>NUCLEOTIDE SEQUENCE [LARGE SCALE GENOMIC DNA]</scope>
    <source>
        <strain>ATCC BAA-679 / EGD-e</strain>
    </source>
</reference>
<reference key="5">
    <citation type="journal article" date="1994" name="EMBO J.">
        <title>The ActA protein of Listeria monocytogenes acts as a nucleator inducing reorganization of the actin cytoskeleton.</title>
        <authorList>
            <person name="Pistor S."/>
            <person name="Chakraborty T."/>
            <person name="Niebuhr K."/>
            <person name="Domann E."/>
            <person name="Wehland J."/>
        </authorList>
    </citation>
    <scope>CHARACTERIZATION</scope>
</reference>
<sequence>MGLNRFMRAMMVVFITANCITINPDIIFAATDSEDSSLNTDEWEEEKTEEQPSEVNTGPRYETAREVSSRDIKELEKSNKVRNTNKADLIAMLKEKAEKGPNINNNNSEQTENAAINEEASGADRPAIQVERRHPGLPSDSAAEIKKRRKAIASSDSELESLTYPDKPTKVNKKKVAKESVADASESDLDSSMQSADESSPQPLKANQQPFFPKVFKKIKDAGKWVRDKIDENPEVKKAIVDKSAGLIDQLLTKKKSEEVNASDFPPPPTDEELRLALPETPMLLGFNAPATSEPSSFEFPPPPTDEELRLALPETPMLLGFNAPATSEPSSFEFPPPPTEDELEIIRETASSLDSSFTRGDLASLRNAINRHSQNFSDFPPIPTEEELNGRGGRPTSEEFSSLNSGDFTDDENSETTEEEIDRLADLRDRGTGKHSRNAGFLPLNPFASSPVPSLSPKVSKISAPALISDITKKTPFKNPSQPLNVFNKKTTTKTVTKKPTPVKTAPKLAELPATKPQETVLRENKTPFIEKQAETNKQSINMPSLPVIQKEATESDKEEMKPQTEEKMVEESESANNANGKNRSAGIEEGKLIAKSAEDEKAKEEPGNHTTLILAMLAIGVFSLGAFIKIIQLRKNN</sequence>
<accession>P33379</accession>
<dbReference type="EMBL" id="M82881">
    <property type="protein sequence ID" value="AAA25269.1"/>
    <property type="molecule type" value="Genomic_DNA"/>
</dbReference>
<dbReference type="EMBL" id="X59723">
    <property type="protein sequence ID" value="CAA42407.1"/>
    <property type="molecule type" value="Genomic_DNA"/>
</dbReference>
<dbReference type="EMBL" id="AL591974">
    <property type="protein sequence ID" value="CAD00731.1"/>
    <property type="molecule type" value="Genomic_DNA"/>
</dbReference>
<dbReference type="PIR" id="AE1100">
    <property type="entry name" value="AE1100"/>
</dbReference>
<dbReference type="PIR" id="S20887">
    <property type="entry name" value="S20887"/>
</dbReference>
<dbReference type="RefSeq" id="NP_463735.1">
    <property type="nucleotide sequence ID" value="NC_003210.1"/>
</dbReference>
<dbReference type="RefSeq" id="WP_010989374.1">
    <property type="nucleotide sequence ID" value="NZ_CP149495.1"/>
</dbReference>
<dbReference type="PDB" id="5NC2">
    <property type="method" value="X-ray"/>
    <property type="resolution" value="1.58 A"/>
    <property type="chains" value="I/J=336-344"/>
</dbReference>
<dbReference type="PDB" id="5NC7">
    <property type="method" value="X-ray"/>
    <property type="resolution" value="2.70 A"/>
    <property type="chains" value="I/J/K/L/W/X/Y/Z=335-344"/>
</dbReference>
<dbReference type="PDBsum" id="5NC2"/>
<dbReference type="PDBsum" id="5NC7"/>
<dbReference type="SMR" id="P33379"/>
<dbReference type="ELM" id="P33379"/>
<dbReference type="STRING" id="169963.gene:17592840"/>
<dbReference type="PaxDb" id="169963-lmo0204"/>
<dbReference type="EnsemblBacteria" id="CAD00731">
    <property type="protein sequence ID" value="CAD00731"/>
    <property type="gene ID" value="CAD00731"/>
</dbReference>
<dbReference type="GeneID" id="987035"/>
<dbReference type="KEGG" id="lmo:lmo0204"/>
<dbReference type="PATRIC" id="fig|169963.11.peg.209"/>
<dbReference type="eggNOG" id="ENOG503083A">
    <property type="taxonomic scope" value="Bacteria"/>
</dbReference>
<dbReference type="HOGENOM" id="CLU_451854_0_0_9"/>
<dbReference type="OrthoDB" id="10020811at2"/>
<dbReference type="BioCyc" id="LMON169963:LMO0204-MONOMER"/>
<dbReference type="PHI-base" id="PHI:8143"/>
<dbReference type="PHI-base" id="PHI:9820"/>
<dbReference type="Proteomes" id="UP000000817">
    <property type="component" value="Chromosome"/>
</dbReference>
<dbReference type="GO" id="GO:0005886">
    <property type="term" value="C:plasma membrane"/>
    <property type="evidence" value="ECO:0007669"/>
    <property type="project" value="UniProtKB-SubCell"/>
</dbReference>
<dbReference type="InterPro" id="IPR007752">
    <property type="entry name" value="Virulence_actor_ActA"/>
</dbReference>
<dbReference type="Pfam" id="PF05058">
    <property type="entry name" value="ActA"/>
    <property type="match status" value="1"/>
</dbReference>
<feature type="signal peptide" evidence="3">
    <location>
        <begin position="1"/>
        <end position="29"/>
    </location>
</feature>
<feature type="chain" id="PRO_0000020625" description="Actin assembly-inducing protein">
    <location>
        <begin position="30"/>
        <end position="639"/>
    </location>
</feature>
<feature type="transmembrane region" description="Helical" evidence="1">
    <location>
        <begin position="613"/>
        <end position="633"/>
    </location>
</feature>
<feature type="repeat" description="1">
    <location>
        <begin position="264"/>
        <end position="298"/>
    </location>
</feature>
<feature type="repeat" description="2">
    <location>
        <begin position="299"/>
        <end position="333"/>
    </location>
</feature>
<feature type="repeat" description="3; approximate">
    <location>
        <begin position="334"/>
        <end position="378"/>
    </location>
</feature>
<feature type="repeat" description="4; approximate">
    <location>
        <begin position="379"/>
        <end position="417"/>
    </location>
</feature>
<feature type="repeat" description="5; truncated">
    <location>
        <begin position="418"/>
        <end position="422"/>
    </location>
</feature>
<feature type="region of interest" description="Disordered" evidence="2">
    <location>
        <begin position="36"/>
        <end position="71"/>
    </location>
</feature>
<feature type="region of interest" description="Disordered" evidence="2">
    <location>
        <begin position="132"/>
        <end position="212"/>
    </location>
</feature>
<feature type="region of interest" description="5 X approximate tandem repeats, Pro-rich">
    <location>
        <begin position="264"/>
        <end position="333"/>
    </location>
</feature>
<feature type="region of interest" description="Disordered" evidence="2">
    <location>
        <begin position="285"/>
        <end position="308"/>
    </location>
</feature>
<feature type="region of interest" description="Disordered" evidence="2">
    <location>
        <begin position="320"/>
        <end position="341"/>
    </location>
</feature>
<feature type="region of interest" description="Disordered" evidence="2">
    <location>
        <begin position="372"/>
        <end position="459"/>
    </location>
</feature>
<feature type="region of interest" description="Disordered" evidence="2">
    <location>
        <begin position="474"/>
        <end position="610"/>
    </location>
</feature>
<feature type="short sequence motif" description="Cell attachment site" evidence="1">
    <location>
        <begin position="360"/>
        <end position="362"/>
    </location>
</feature>
<feature type="compositionally biased region" description="Acidic residues" evidence="2">
    <location>
        <begin position="41"/>
        <end position="52"/>
    </location>
</feature>
<feature type="compositionally biased region" description="Basic and acidic residues" evidence="2">
    <location>
        <begin position="62"/>
        <end position="71"/>
    </location>
</feature>
<feature type="compositionally biased region" description="Polar residues" evidence="2">
    <location>
        <begin position="190"/>
        <end position="210"/>
    </location>
</feature>
<feature type="compositionally biased region" description="Acidic residues" evidence="2">
    <location>
        <begin position="409"/>
        <end position="422"/>
    </location>
</feature>
<feature type="compositionally biased region" description="Basic and acidic residues" evidence="2">
    <location>
        <begin position="423"/>
        <end position="433"/>
    </location>
</feature>
<feature type="compositionally biased region" description="Low complexity" evidence="2">
    <location>
        <begin position="450"/>
        <end position="459"/>
    </location>
</feature>
<feature type="compositionally biased region" description="Low complexity" evidence="2">
    <location>
        <begin position="490"/>
        <end position="509"/>
    </location>
</feature>
<feature type="compositionally biased region" description="Basic and acidic residues" evidence="2">
    <location>
        <begin position="553"/>
        <end position="572"/>
    </location>
</feature>
<feature type="compositionally biased region" description="Basic and acidic residues" evidence="2">
    <location>
        <begin position="588"/>
        <end position="609"/>
    </location>
</feature>
<feature type="sequence conflict" description="In Ref. 3; CAA42407." evidence="4" ref="3">
    <original>AP</original>
    <variation>DR</variation>
    <location>
        <begin position="465"/>
        <end position="466"/>
    </location>
</feature>
<feature type="turn" evidence="5">
    <location>
        <begin position="341"/>
        <end position="343"/>
    </location>
</feature>
<comment type="function">
    <text>Virulence factor required for host cell microfilament interaction. It induces actin assembly around the bacteria to allow it to move within the cytoplasm. It is involved in the actin polymerization process. It seems to act as a nucleator that induces the reorganization of the actin cytoskeleton.</text>
</comment>
<comment type="subcellular location">
    <subcellularLocation>
        <location>Cell membrane</location>
        <topology>Single-pass membrane protein</topology>
    </subcellularLocation>
</comment>
<gene>
    <name type="primary">actA</name>
    <name type="synonym">prtB</name>
    <name type="ordered locus">lmo0204</name>
</gene>
<evidence type="ECO:0000255" key="1"/>
<evidence type="ECO:0000256" key="2">
    <source>
        <dbReference type="SAM" id="MobiDB-lite"/>
    </source>
</evidence>
<evidence type="ECO:0000269" key="3">
    <source>
    </source>
</evidence>
<evidence type="ECO:0000305" key="4"/>
<evidence type="ECO:0007829" key="5">
    <source>
        <dbReference type="PDB" id="5NC7"/>
    </source>
</evidence>
<protein>
    <recommendedName>
        <fullName>Actin assembly-inducing protein</fullName>
    </recommendedName>
</protein>
<proteinExistence type="evidence at protein level"/>
<name>ACTA_LISMO</name>
<keyword id="KW-0002">3D-structure</keyword>
<keyword id="KW-1003">Cell membrane</keyword>
<keyword id="KW-0903">Direct protein sequencing</keyword>
<keyword id="KW-0472">Membrane</keyword>
<keyword id="KW-1185">Reference proteome</keyword>
<keyword id="KW-0677">Repeat</keyword>
<keyword id="KW-0732">Signal</keyword>
<keyword id="KW-0812">Transmembrane</keyword>
<keyword id="KW-1133">Transmembrane helix</keyword>
<keyword id="KW-0843">Virulence</keyword>
<organism>
    <name type="scientific">Listeria monocytogenes serovar 1/2a (strain ATCC BAA-679 / EGD-e)</name>
    <dbReference type="NCBI Taxonomy" id="169963"/>
    <lineage>
        <taxon>Bacteria</taxon>
        <taxon>Bacillati</taxon>
        <taxon>Bacillota</taxon>
        <taxon>Bacilli</taxon>
        <taxon>Bacillales</taxon>
        <taxon>Listeriaceae</taxon>
        <taxon>Listeria</taxon>
    </lineage>
</organism>